<sequence>MTVKTRFAPSPTGYLHIGGVRTALFSWAFARHHKGEFLLRIEDTDLARSTAESVNIILDGMKWVGLNYDNADNVVYQTRRFDRYKEVIAELLEKGHAYYCYCSKEELEAMREKAEKEGTATYDRRWRPEAGKTLPEIPAGVQPVVRFKTPLDGVTRWADLVKGEISIPNEALDDLIIARSDGSPTYNFCVVVDDYDMGVTHVIRGDDHVNNTPKQINILKAIGATLPEYGHLPMILNEQGKKISKRSGDTVAITDFGAMGILPEAMLNYLARLGWAHGDDEFFTMEQFIEWFDLKDVSPSPSRMDLKKLYWINGEHIKITPNGKLAELVKPRLALRDIHETEKPALEDVLALVKDRAQDLNTLADECLYFYVKQTPTEADVQKHWDDEAAARMLRFAERLEGLEDWNAEAIHDLFKPFCDEEGIKMGKLGMPLRLAVCGTAKTPSVDAVLALIGKEEVLKRIRA</sequence>
<organism>
    <name type="scientific">Neisseria meningitidis serogroup A / serotype 4A (strain DSM 15465 / Z2491)</name>
    <dbReference type="NCBI Taxonomy" id="122587"/>
    <lineage>
        <taxon>Bacteria</taxon>
        <taxon>Pseudomonadati</taxon>
        <taxon>Pseudomonadota</taxon>
        <taxon>Betaproteobacteria</taxon>
        <taxon>Neisseriales</taxon>
        <taxon>Neisseriaceae</taxon>
        <taxon>Neisseria</taxon>
    </lineage>
</organism>
<name>SYE_NEIMA</name>
<comment type="function">
    <text evidence="1">Catalyzes the attachment of glutamate to tRNA(Glu) in a two-step reaction: glutamate is first activated by ATP to form Glu-AMP and then transferred to the acceptor end of tRNA(Glu).</text>
</comment>
<comment type="catalytic activity">
    <reaction evidence="1">
        <text>tRNA(Glu) + L-glutamate + ATP = L-glutamyl-tRNA(Glu) + AMP + diphosphate</text>
        <dbReference type="Rhea" id="RHEA:23540"/>
        <dbReference type="Rhea" id="RHEA-COMP:9663"/>
        <dbReference type="Rhea" id="RHEA-COMP:9680"/>
        <dbReference type="ChEBI" id="CHEBI:29985"/>
        <dbReference type="ChEBI" id="CHEBI:30616"/>
        <dbReference type="ChEBI" id="CHEBI:33019"/>
        <dbReference type="ChEBI" id="CHEBI:78442"/>
        <dbReference type="ChEBI" id="CHEBI:78520"/>
        <dbReference type="ChEBI" id="CHEBI:456215"/>
        <dbReference type="EC" id="6.1.1.17"/>
    </reaction>
</comment>
<comment type="subunit">
    <text evidence="1">Monomer.</text>
</comment>
<comment type="subcellular location">
    <subcellularLocation>
        <location evidence="1">Cytoplasm</location>
    </subcellularLocation>
</comment>
<comment type="similarity">
    <text evidence="1">Belongs to the class-I aminoacyl-tRNA synthetase family. Glutamate--tRNA ligase type 1 subfamily.</text>
</comment>
<keyword id="KW-0030">Aminoacyl-tRNA synthetase</keyword>
<keyword id="KW-0067">ATP-binding</keyword>
<keyword id="KW-0963">Cytoplasm</keyword>
<keyword id="KW-0436">Ligase</keyword>
<keyword id="KW-0547">Nucleotide-binding</keyword>
<keyword id="KW-0648">Protein biosynthesis</keyword>
<dbReference type="EC" id="6.1.1.17" evidence="1"/>
<dbReference type="EMBL" id="AL157959">
    <property type="protein sequence ID" value="CAM07556.1"/>
    <property type="molecule type" value="Genomic_DNA"/>
</dbReference>
<dbReference type="PIR" id="F82019">
    <property type="entry name" value="F82019"/>
</dbReference>
<dbReference type="RefSeq" id="WP_002246563.1">
    <property type="nucleotide sequence ID" value="NC_003116.1"/>
</dbReference>
<dbReference type="SMR" id="Q9JWT4"/>
<dbReference type="EnsemblBacteria" id="CAM07556">
    <property type="protein sequence ID" value="CAM07556"/>
    <property type="gene ID" value="NMA0250"/>
</dbReference>
<dbReference type="KEGG" id="nma:NMA0250"/>
<dbReference type="HOGENOM" id="CLU_015768_6_3_4"/>
<dbReference type="Proteomes" id="UP000000626">
    <property type="component" value="Chromosome"/>
</dbReference>
<dbReference type="GO" id="GO:0005829">
    <property type="term" value="C:cytosol"/>
    <property type="evidence" value="ECO:0007669"/>
    <property type="project" value="TreeGrafter"/>
</dbReference>
<dbReference type="GO" id="GO:0005524">
    <property type="term" value="F:ATP binding"/>
    <property type="evidence" value="ECO:0007669"/>
    <property type="project" value="UniProtKB-UniRule"/>
</dbReference>
<dbReference type="GO" id="GO:0004818">
    <property type="term" value="F:glutamate-tRNA ligase activity"/>
    <property type="evidence" value="ECO:0007669"/>
    <property type="project" value="UniProtKB-UniRule"/>
</dbReference>
<dbReference type="GO" id="GO:0000049">
    <property type="term" value="F:tRNA binding"/>
    <property type="evidence" value="ECO:0007669"/>
    <property type="project" value="InterPro"/>
</dbReference>
<dbReference type="GO" id="GO:0008270">
    <property type="term" value="F:zinc ion binding"/>
    <property type="evidence" value="ECO:0007669"/>
    <property type="project" value="InterPro"/>
</dbReference>
<dbReference type="GO" id="GO:0006424">
    <property type="term" value="P:glutamyl-tRNA aminoacylation"/>
    <property type="evidence" value="ECO:0007669"/>
    <property type="project" value="UniProtKB-UniRule"/>
</dbReference>
<dbReference type="CDD" id="cd00808">
    <property type="entry name" value="GluRS_core"/>
    <property type="match status" value="1"/>
</dbReference>
<dbReference type="FunFam" id="3.40.50.620:FF:000007">
    <property type="entry name" value="Glutamate--tRNA ligase"/>
    <property type="match status" value="1"/>
</dbReference>
<dbReference type="Gene3D" id="1.10.10.350">
    <property type="match status" value="1"/>
</dbReference>
<dbReference type="Gene3D" id="3.40.50.620">
    <property type="entry name" value="HUPs"/>
    <property type="match status" value="1"/>
</dbReference>
<dbReference type="HAMAP" id="MF_00022">
    <property type="entry name" value="Glu_tRNA_synth_type1"/>
    <property type="match status" value="1"/>
</dbReference>
<dbReference type="InterPro" id="IPR045462">
    <property type="entry name" value="aa-tRNA-synth_I_cd-bd"/>
</dbReference>
<dbReference type="InterPro" id="IPR020751">
    <property type="entry name" value="aa-tRNA-synth_I_codon-bd_sub2"/>
</dbReference>
<dbReference type="InterPro" id="IPR001412">
    <property type="entry name" value="aa-tRNA-synth_I_CS"/>
</dbReference>
<dbReference type="InterPro" id="IPR008925">
    <property type="entry name" value="aa_tRNA-synth_I_cd-bd_sf"/>
</dbReference>
<dbReference type="InterPro" id="IPR004527">
    <property type="entry name" value="Glu-tRNA-ligase_bac/mito"/>
</dbReference>
<dbReference type="InterPro" id="IPR000924">
    <property type="entry name" value="Glu/Gln-tRNA-synth"/>
</dbReference>
<dbReference type="InterPro" id="IPR020058">
    <property type="entry name" value="Glu/Gln-tRNA-synth_Ib_cat-dom"/>
</dbReference>
<dbReference type="InterPro" id="IPR049940">
    <property type="entry name" value="GluQ/Sye"/>
</dbReference>
<dbReference type="InterPro" id="IPR033910">
    <property type="entry name" value="GluRS_core"/>
</dbReference>
<dbReference type="InterPro" id="IPR014729">
    <property type="entry name" value="Rossmann-like_a/b/a_fold"/>
</dbReference>
<dbReference type="NCBIfam" id="TIGR00464">
    <property type="entry name" value="gltX_bact"/>
    <property type="match status" value="1"/>
</dbReference>
<dbReference type="PANTHER" id="PTHR43311">
    <property type="entry name" value="GLUTAMATE--TRNA LIGASE"/>
    <property type="match status" value="1"/>
</dbReference>
<dbReference type="PANTHER" id="PTHR43311:SF2">
    <property type="entry name" value="GLUTAMATE--TRNA LIGASE, MITOCHONDRIAL-RELATED"/>
    <property type="match status" value="1"/>
</dbReference>
<dbReference type="Pfam" id="PF19269">
    <property type="entry name" value="Anticodon_2"/>
    <property type="match status" value="1"/>
</dbReference>
<dbReference type="Pfam" id="PF00749">
    <property type="entry name" value="tRNA-synt_1c"/>
    <property type="match status" value="1"/>
</dbReference>
<dbReference type="PRINTS" id="PR00987">
    <property type="entry name" value="TRNASYNTHGLU"/>
</dbReference>
<dbReference type="SUPFAM" id="SSF48163">
    <property type="entry name" value="An anticodon-binding domain of class I aminoacyl-tRNA synthetases"/>
    <property type="match status" value="1"/>
</dbReference>
<dbReference type="SUPFAM" id="SSF52374">
    <property type="entry name" value="Nucleotidylyl transferase"/>
    <property type="match status" value="1"/>
</dbReference>
<dbReference type="PROSITE" id="PS00178">
    <property type="entry name" value="AA_TRNA_LIGASE_I"/>
    <property type="match status" value="1"/>
</dbReference>
<feature type="chain" id="PRO_0000119612" description="Glutamate--tRNA ligase">
    <location>
        <begin position="1"/>
        <end position="464"/>
    </location>
</feature>
<feature type="short sequence motif" description="'HIGH' region" evidence="1">
    <location>
        <begin position="9"/>
        <end position="19"/>
    </location>
</feature>
<feature type="short sequence motif" description="'KMSKS' region" evidence="1">
    <location>
        <begin position="242"/>
        <end position="246"/>
    </location>
</feature>
<feature type="binding site" evidence="1">
    <location>
        <position position="245"/>
    </location>
    <ligand>
        <name>ATP</name>
        <dbReference type="ChEBI" id="CHEBI:30616"/>
    </ligand>
</feature>
<gene>
    <name evidence="1" type="primary">gltX</name>
    <name type="ordered locus">NMA0250</name>
</gene>
<evidence type="ECO:0000255" key="1">
    <source>
        <dbReference type="HAMAP-Rule" id="MF_00022"/>
    </source>
</evidence>
<reference key="1">
    <citation type="journal article" date="2000" name="Nature">
        <title>Complete DNA sequence of a serogroup A strain of Neisseria meningitidis Z2491.</title>
        <authorList>
            <person name="Parkhill J."/>
            <person name="Achtman M."/>
            <person name="James K.D."/>
            <person name="Bentley S.D."/>
            <person name="Churcher C.M."/>
            <person name="Klee S.R."/>
            <person name="Morelli G."/>
            <person name="Basham D."/>
            <person name="Brown D."/>
            <person name="Chillingworth T."/>
            <person name="Davies R.M."/>
            <person name="Davis P."/>
            <person name="Devlin K."/>
            <person name="Feltwell T."/>
            <person name="Hamlin N."/>
            <person name="Holroyd S."/>
            <person name="Jagels K."/>
            <person name="Leather S."/>
            <person name="Moule S."/>
            <person name="Mungall K.L."/>
            <person name="Quail M.A."/>
            <person name="Rajandream M.A."/>
            <person name="Rutherford K.M."/>
            <person name="Simmonds M."/>
            <person name="Skelton J."/>
            <person name="Whitehead S."/>
            <person name="Spratt B.G."/>
            <person name="Barrell B.G."/>
        </authorList>
    </citation>
    <scope>NUCLEOTIDE SEQUENCE [LARGE SCALE GENOMIC DNA]</scope>
    <source>
        <strain>DSM 15465 / Z2491</strain>
    </source>
</reference>
<accession>Q9JWT4</accession>
<accession>A1IP96</accession>
<protein>
    <recommendedName>
        <fullName evidence="1">Glutamate--tRNA ligase</fullName>
        <ecNumber evidence="1">6.1.1.17</ecNumber>
    </recommendedName>
    <alternativeName>
        <fullName evidence="1">Glutamyl-tRNA synthetase</fullName>
        <shortName evidence="1">GluRS</shortName>
    </alternativeName>
</protein>
<proteinExistence type="inferred from homology"/>